<organism>
    <name type="scientific">Micrococcus luteus (strain ATCC 4698 / DSM 20030 / JCM 1464 / CCM 169 / CCUG 5858 / IAM 1056 / NBRC 3333 / NCIMB 9278 / NCTC 2665 / VKM Ac-2230)</name>
    <name type="common">Micrococcus lysodeikticus</name>
    <dbReference type="NCBI Taxonomy" id="465515"/>
    <lineage>
        <taxon>Bacteria</taxon>
        <taxon>Bacillati</taxon>
        <taxon>Actinomycetota</taxon>
        <taxon>Actinomycetes</taxon>
        <taxon>Micrococcales</taxon>
        <taxon>Micrococcaceae</taxon>
        <taxon>Micrococcus</taxon>
    </lineage>
</organism>
<reference key="1">
    <citation type="journal article" date="2010" name="J. Bacteriol.">
        <title>Genome sequence of the Fleming strain of Micrococcus luteus, a simple free-living actinobacterium.</title>
        <authorList>
            <person name="Young M."/>
            <person name="Artsatbanov V."/>
            <person name="Beller H.R."/>
            <person name="Chandra G."/>
            <person name="Chater K.F."/>
            <person name="Dover L.G."/>
            <person name="Goh E.B."/>
            <person name="Kahan T."/>
            <person name="Kaprelyants A.S."/>
            <person name="Kyrpides N."/>
            <person name="Lapidus A."/>
            <person name="Lowry S.R."/>
            <person name="Lykidis A."/>
            <person name="Mahillon J."/>
            <person name="Markowitz V."/>
            <person name="Mavromatis K."/>
            <person name="Mukamolova G.V."/>
            <person name="Oren A."/>
            <person name="Rokem J.S."/>
            <person name="Smith M.C."/>
            <person name="Young D.I."/>
            <person name="Greenblatt C.L."/>
        </authorList>
    </citation>
    <scope>NUCLEOTIDE SEQUENCE [LARGE SCALE GENOMIC DNA]</scope>
    <source>
        <strain>ATCC 4698 / DSM 20030 / JCM 1464 / CCM 169 / CCUG 5858 / IAM 1056 / NBRC 3333 / NCIMB 9278 / NCTC 2665 / VKM Ac-2230</strain>
    </source>
</reference>
<sequence>MARVKRAVNAHKKRRTMLERASGYRGQRSRLYRKAKEQMLHSFTYNYQHRHKRKGDFRRLWITRINAAARANGMTYNRFMQGLKLAGVEVDRRMLAEIAVSDAATFAVLVKTAREALPADVNAPAASR</sequence>
<dbReference type="EMBL" id="CP001628">
    <property type="protein sequence ID" value="ACS30952.1"/>
    <property type="molecule type" value="Genomic_DNA"/>
</dbReference>
<dbReference type="RefSeq" id="WP_002853696.1">
    <property type="nucleotide sequence ID" value="NZ_WBMF01000168.1"/>
</dbReference>
<dbReference type="SMR" id="C5CAP8"/>
<dbReference type="STRING" id="465515.Mlut_14570"/>
<dbReference type="EnsemblBacteria" id="ACS30952">
    <property type="protein sequence ID" value="ACS30952"/>
    <property type="gene ID" value="Mlut_14570"/>
</dbReference>
<dbReference type="GeneID" id="93364511"/>
<dbReference type="KEGG" id="mlu:Mlut_14570"/>
<dbReference type="eggNOG" id="COG0292">
    <property type="taxonomic scope" value="Bacteria"/>
</dbReference>
<dbReference type="HOGENOM" id="CLU_123265_0_0_11"/>
<dbReference type="Proteomes" id="UP000000738">
    <property type="component" value="Chromosome"/>
</dbReference>
<dbReference type="GO" id="GO:1990904">
    <property type="term" value="C:ribonucleoprotein complex"/>
    <property type="evidence" value="ECO:0007669"/>
    <property type="project" value="UniProtKB-KW"/>
</dbReference>
<dbReference type="GO" id="GO:0005840">
    <property type="term" value="C:ribosome"/>
    <property type="evidence" value="ECO:0007669"/>
    <property type="project" value="UniProtKB-KW"/>
</dbReference>
<dbReference type="GO" id="GO:0019843">
    <property type="term" value="F:rRNA binding"/>
    <property type="evidence" value="ECO:0007669"/>
    <property type="project" value="UniProtKB-UniRule"/>
</dbReference>
<dbReference type="GO" id="GO:0003735">
    <property type="term" value="F:structural constituent of ribosome"/>
    <property type="evidence" value="ECO:0007669"/>
    <property type="project" value="InterPro"/>
</dbReference>
<dbReference type="GO" id="GO:0000027">
    <property type="term" value="P:ribosomal large subunit assembly"/>
    <property type="evidence" value="ECO:0007669"/>
    <property type="project" value="UniProtKB-UniRule"/>
</dbReference>
<dbReference type="GO" id="GO:0006412">
    <property type="term" value="P:translation"/>
    <property type="evidence" value="ECO:0007669"/>
    <property type="project" value="InterPro"/>
</dbReference>
<dbReference type="CDD" id="cd07026">
    <property type="entry name" value="Ribosomal_L20"/>
    <property type="match status" value="1"/>
</dbReference>
<dbReference type="FunFam" id="1.10.1900.20:FF:000001">
    <property type="entry name" value="50S ribosomal protein L20"/>
    <property type="match status" value="1"/>
</dbReference>
<dbReference type="Gene3D" id="6.10.160.10">
    <property type="match status" value="1"/>
</dbReference>
<dbReference type="Gene3D" id="1.10.1900.20">
    <property type="entry name" value="Ribosomal protein L20"/>
    <property type="match status" value="1"/>
</dbReference>
<dbReference type="HAMAP" id="MF_00382">
    <property type="entry name" value="Ribosomal_bL20"/>
    <property type="match status" value="1"/>
</dbReference>
<dbReference type="InterPro" id="IPR005813">
    <property type="entry name" value="Ribosomal_bL20"/>
</dbReference>
<dbReference type="InterPro" id="IPR049946">
    <property type="entry name" value="RIBOSOMAL_L20_CS"/>
</dbReference>
<dbReference type="InterPro" id="IPR035566">
    <property type="entry name" value="Ribosomal_protein_bL20_C"/>
</dbReference>
<dbReference type="NCBIfam" id="TIGR01032">
    <property type="entry name" value="rplT_bact"/>
    <property type="match status" value="1"/>
</dbReference>
<dbReference type="PANTHER" id="PTHR10986">
    <property type="entry name" value="39S RIBOSOMAL PROTEIN L20"/>
    <property type="match status" value="1"/>
</dbReference>
<dbReference type="Pfam" id="PF00453">
    <property type="entry name" value="Ribosomal_L20"/>
    <property type="match status" value="1"/>
</dbReference>
<dbReference type="PRINTS" id="PR00062">
    <property type="entry name" value="RIBOSOMALL20"/>
</dbReference>
<dbReference type="SUPFAM" id="SSF74731">
    <property type="entry name" value="Ribosomal protein L20"/>
    <property type="match status" value="1"/>
</dbReference>
<dbReference type="PROSITE" id="PS00937">
    <property type="entry name" value="RIBOSOMAL_L20"/>
    <property type="match status" value="1"/>
</dbReference>
<protein>
    <recommendedName>
        <fullName evidence="1">Large ribosomal subunit protein bL20</fullName>
    </recommendedName>
    <alternativeName>
        <fullName evidence="2">50S ribosomal protein L20</fullName>
    </alternativeName>
</protein>
<gene>
    <name evidence="1" type="primary">rplT</name>
    <name type="ordered locus">Mlut_14570</name>
</gene>
<feature type="chain" id="PRO_1000205719" description="Large ribosomal subunit protein bL20">
    <location>
        <begin position="1"/>
        <end position="128"/>
    </location>
</feature>
<accession>C5CAP8</accession>
<proteinExistence type="inferred from homology"/>
<evidence type="ECO:0000255" key="1">
    <source>
        <dbReference type="HAMAP-Rule" id="MF_00382"/>
    </source>
</evidence>
<evidence type="ECO:0000305" key="2"/>
<name>RL20_MICLC</name>
<comment type="function">
    <text evidence="1">Binds directly to 23S ribosomal RNA and is necessary for the in vitro assembly process of the 50S ribosomal subunit. It is not involved in the protein synthesizing functions of that subunit.</text>
</comment>
<comment type="similarity">
    <text evidence="1">Belongs to the bacterial ribosomal protein bL20 family.</text>
</comment>
<keyword id="KW-1185">Reference proteome</keyword>
<keyword id="KW-0687">Ribonucleoprotein</keyword>
<keyword id="KW-0689">Ribosomal protein</keyword>
<keyword id="KW-0694">RNA-binding</keyword>
<keyword id="KW-0699">rRNA-binding</keyword>